<gene>
    <name type="primary">ABCC8</name>
    <name type="synonym">SUR</name>
</gene>
<name>ABCC8_CRICR</name>
<sequence length="1582" mass="177147">MPLAFCGTENHSAAYRVDQGVLNNGCFVDALNVVPHVFLLFITFPILFIGWGSQSSKVHIHHSTWLHFPGHNLRWILTFILLFVLVCEIAEGILSDGVTESRHLHLYMPAGMAFMAAITSVVYYHNIETSNFPKLLIALLIYWTLAFITKTIKFVKFYDHAIGFSQLRFCLTGLLVILYGMLLLVEVNVIRVRRYIFFKTPREVKPPEDLQDLGVRFLQPFVNLLSKGTYWWMNAFIKTAHKKPIDLRAIAKLPIAMRALTNYQRLCVAFDAQARKDTQSPQGARAIWRALCHAFGRRLILSSTFRILADLLGFAGPLCIFGIVDHLGKENHVFQPKTQFLGVYFVSSQEFLGNAYVLAVLLFLALLLQRTFLQASYYVAIETGINLRGAIQTKIYNKIMHMSTSNLSMGEMTAGQICNLVAIDTNQLMWFFFLCPNLWTMPVQIIVGVILLYYILGVSALIGAAVIILLAPVQYFVATKLSQAQRTTLEHSNERLKQTNEMLRGMKLLKLYAWESIFCSRVEVTRRKEMTSLRAFAVYTSISIFMNTAIPIAAVLITFVGHVSFFKESDLSPSVAFASLSLFHILVTPLFLLSSVVRSTVKALVSVQKLSEFLSSAEIREEQCAPREPAPQGQAGKYQAVPLKVVNRKRPAREEVRDLLGPLQRLAPSMDGDADNFCVQIIGGFFTWTPDGIPTLSNITIRIPRGQLTMIVGQVGCGKSSLLLATLGEMQKVSGAVFWNSNLPDSEGEDPSSPERETAAGSDIRSRGPVAYASQKPWLLNATVEENITFESPFNKQRYKMVIEACSLQPDIDILPHGDQTQIGERGINLSGGQRQRISVARALYQQTNVVFLDDPFSALDVHLSDHLMQAGILELLRDDKRTVVLVTHKLQYLPHADWIIAMKDGTIQREGTLKDFQRSECQLFEHWKTLMNRQDQELEKETVMERKASEPSQGLPRAMSSRDGLLLDEEEEEEEAAESEEDDNLSSVLHQRAKIPWRACTKYLSSAGILLLSLLVFSQLLKHMVLVAIDYWLAKWTDSALVLSPAARNCSLSQECDLDQSVYAMVFTLLCSLGIVLCLVTSVTVEWTGLKVAKRLHRSLLNRIILAPMRFFETTPLGSILNRFSSDCNTIDQHIPSTLECLSRSTLLCVSALTVISYVTPVFLVALLPLAVVCYFIQKYFRVASRDLQQLDDTTQLPLVSHFAETVEGLTTIRAFRYEARFQQKLLEYTDSNNIASLFLTAANRWLEVCMEYIGACVVLIAAATSISNSLHRELSAGLVGLGLTYALMVSNYLNWMVRNLADMEIQLGAVKRIHALLKTEAESYEGLLAPSLIPKNWPDQGKIQIQNLSVRYDSSLKPVLKHVNTLISPGQKIGICGRTGSGKSSFSLAFFRMVDMFEGRIIIDGIDIAKLPLHTLRSRLSIILQDPVLFSGTIRFNLDPEKKCSDSTLWEALEIAQLKLVVKALPGGLDAIITEGGENFSQGQRQLFCLARAFVRKTSIFIMDEATASIDMATENILQKVVMTAFADRTVVTIAHRVHTILSADLVMVLKRGAILEFDKPETLLSQKDSVFASFVRADK</sequence>
<feature type="chain" id="PRO_0000093399" description="ATP-binding cassette sub-family C member 8">
    <location>
        <begin position="1"/>
        <end position="1582"/>
    </location>
</feature>
<feature type="topological domain" description="Extracellular" evidence="8">
    <location>
        <begin position="1"/>
        <end position="30"/>
    </location>
</feature>
<feature type="transmembrane region" description="Helical; Name=1" evidence="1">
    <location>
        <begin position="31"/>
        <end position="47"/>
    </location>
</feature>
<feature type="topological domain" description="Cytoplasmic" evidence="8">
    <location>
        <begin position="48"/>
        <end position="72"/>
    </location>
</feature>
<feature type="transmembrane region" description="Helical; Name=2" evidence="1">
    <location>
        <begin position="73"/>
        <end position="89"/>
    </location>
</feature>
<feature type="topological domain" description="Extracellular" evidence="8">
    <location>
        <begin position="90"/>
        <end position="106"/>
    </location>
</feature>
<feature type="transmembrane region" description="Helical; Name=3" evidence="1">
    <location>
        <begin position="107"/>
        <end position="123"/>
    </location>
</feature>
<feature type="topological domain" description="Cytoplasmic" evidence="8">
    <location>
        <begin position="124"/>
        <end position="136"/>
    </location>
</feature>
<feature type="transmembrane region" description="Helical; Name=4" evidence="1">
    <location>
        <begin position="137"/>
        <end position="153"/>
    </location>
</feature>
<feature type="topological domain" description="Extracellular" evidence="8">
    <location>
        <begin position="154"/>
        <end position="169"/>
    </location>
</feature>
<feature type="transmembrane region" description="Helical; Name=5" evidence="1">
    <location>
        <begin position="170"/>
        <end position="186"/>
    </location>
</feature>
<feature type="topological domain" description="Cytoplasmic" evidence="8">
    <location>
        <begin position="187"/>
        <end position="303"/>
    </location>
</feature>
<feature type="transmembrane region" description="Helical; Name=6" evidence="1">
    <location>
        <begin position="304"/>
        <end position="319"/>
    </location>
</feature>
<feature type="topological domain" description="Extracellular" evidence="7">
    <location>
        <begin position="320"/>
        <end position="356"/>
    </location>
</feature>
<feature type="transmembrane region" description="Helical; Name=7" evidence="1">
    <location>
        <begin position="357"/>
        <end position="372"/>
    </location>
</feature>
<feature type="topological domain" description="Cytoplasmic" evidence="7">
    <location>
        <begin position="373"/>
        <end position="438"/>
    </location>
</feature>
<feature type="transmembrane region" description="Helical; Name=8" evidence="1">
    <location>
        <begin position="439"/>
        <end position="454"/>
    </location>
</feature>
<feature type="topological domain" description="Extracellular" evidence="7">
    <location>
        <begin position="455"/>
        <end position="460"/>
    </location>
</feature>
<feature type="transmembrane region" description="Helical; Name=9" evidence="1">
    <location>
        <begin position="461"/>
        <end position="473"/>
    </location>
</feature>
<feature type="topological domain" description="Cytoplasmic" evidence="7">
    <location>
        <begin position="474"/>
        <end position="541"/>
    </location>
</feature>
<feature type="transmembrane region" description="Helical; Name=10" evidence="1">
    <location>
        <begin position="542"/>
        <end position="557"/>
    </location>
</feature>
<feature type="topological domain" description="Extracellular" evidence="7">
    <location>
        <begin position="558"/>
        <end position="576"/>
    </location>
</feature>
<feature type="transmembrane region" description="Helical; Name=11" evidence="1">
    <location>
        <begin position="577"/>
        <end position="592"/>
    </location>
</feature>
<feature type="topological domain" description="Cytoplasmic" evidence="8">
    <location>
        <begin position="593"/>
        <end position="1013"/>
    </location>
</feature>
<feature type="transmembrane region" description="Helical; Name=12" evidence="1">
    <location>
        <begin position="1014"/>
        <end position="1031"/>
    </location>
</feature>
<feature type="topological domain" description="Extracellular" evidence="8">
    <location>
        <begin position="1032"/>
        <end position="1067"/>
    </location>
</feature>
<feature type="transmembrane region" description="Helical; Name=13" evidence="1">
    <location>
        <begin position="1068"/>
        <end position="1084"/>
    </location>
</feature>
<feature type="topological domain" description="Cytoplasmic" evidence="7">
    <location>
        <begin position="1085"/>
        <end position="1143"/>
    </location>
</feature>
<feature type="transmembrane region" description="Helical; Name=14" evidence="1">
    <location>
        <begin position="1144"/>
        <end position="1161"/>
    </location>
</feature>
<feature type="topological domain" description="Extracellular" evidence="7">
    <location>
        <position position="1162"/>
    </location>
</feature>
<feature type="transmembrane region" description="Helical; Name=15" evidence="1">
    <location>
        <begin position="1163"/>
        <end position="1175"/>
    </location>
</feature>
<feature type="topological domain" description="Cytoplasmic" evidence="7">
    <location>
        <begin position="1176"/>
        <end position="1249"/>
    </location>
</feature>
<feature type="transmembrane region" description="Helical; Name=16" evidence="1">
    <location>
        <begin position="1250"/>
        <end position="1265"/>
    </location>
</feature>
<feature type="topological domain" description="Extracellular" evidence="8">
    <location>
        <begin position="1266"/>
        <end position="1281"/>
    </location>
</feature>
<feature type="transmembrane region" description="Helical; Name=17" evidence="1">
    <location>
        <begin position="1282"/>
        <end position="1297"/>
    </location>
</feature>
<feature type="topological domain" description="Cytoplasmic" evidence="8">
    <location>
        <begin position="1298"/>
        <end position="1582"/>
    </location>
</feature>
<feature type="domain" description="ABC transmembrane type-1 1" evidence="3">
    <location>
        <begin position="299"/>
        <end position="602"/>
    </location>
</feature>
<feature type="domain" description="ABC transporter 1" evidence="2">
    <location>
        <begin position="679"/>
        <end position="930"/>
    </location>
</feature>
<feature type="domain" description="ABC transmembrane type-1 2" evidence="3">
    <location>
        <begin position="1013"/>
        <end position="1307"/>
    </location>
</feature>
<feature type="domain" description="ABC transporter 2" evidence="2">
    <location>
        <begin position="1345"/>
        <end position="1579"/>
    </location>
</feature>
<feature type="region of interest" description="Disordered" evidence="4">
    <location>
        <begin position="741"/>
        <end position="766"/>
    </location>
</feature>
<feature type="region of interest" description="Disordered" evidence="4">
    <location>
        <begin position="939"/>
        <end position="962"/>
    </location>
</feature>
<feature type="compositionally biased region" description="Basic and acidic residues" evidence="4">
    <location>
        <begin position="939"/>
        <end position="950"/>
    </location>
</feature>
<feature type="binding site" evidence="1">
    <location>
        <position position="688"/>
    </location>
    <ligand>
        <name>ATP</name>
        <dbReference type="ChEBI" id="CHEBI:30616"/>
    </ligand>
</feature>
<feature type="binding site" evidence="1">
    <location>
        <position position="716"/>
    </location>
    <ligand>
        <name>ATP</name>
        <dbReference type="ChEBI" id="CHEBI:30616"/>
    </ligand>
</feature>
<feature type="binding site" evidence="1">
    <location>
        <position position="720"/>
    </location>
    <ligand>
        <name>ATP</name>
        <dbReference type="ChEBI" id="CHEBI:30616"/>
    </ligand>
</feature>
<feature type="binding site" evidence="1">
    <location>
        <position position="720"/>
    </location>
    <ligand>
        <name>Mg(2+)</name>
        <dbReference type="ChEBI" id="CHEBI:18420"/>
    </ligand>
</feature>
<feature type="binding site" evidence="1">
    <location>
        <position position="721"/>
    </location>
    <ligand>
        <name>ATP</name>
        <dbReference type="ChEBI" id="CHEBI:30616"/>
    </ligand>
</feature>
<feature type="binding site" evidence="1">
    <location>
        <position position="775"/>
    </location>
    <ligand>
        <name>Mg(2+)</name>
        <dbReference type="ChEBI" id="CHEBI:18420"/>
    </ligand>
</feature>
<feature type="binding site" evidence="1">
    <location>
        <position position="1381"/>
    </location>
    <ligand>
        <name>ADP</name>
        <dbReference type="ChEBI" id="CHEBI:456216"/>
    </ligand>
</feature>
<feature type="binding site" evidence="1">
    <location>
        <position position="1382"/>
    </location>
    <ligand>
        <name>ADP</name>
        <dbReference type="ChEBI" id="CHEBI:456216"/>
    </ligand>
</feature>
<feature type="binding site" evidence="1">
    <location>
        <position position="1384"/>
    </location>
    <ligand>
        <name>ADP</name>
        <dbReference type="ChEBI" id="CHEBI:456216"/>
    </ligand>
</feature>
<feature type="binding site" evidence="1">
    <location>
        <position position="1385"/>
    </location>
    <ligand>
        <name>ADP</name>
        <dbReference type="ChEBI" id="CHEBI:456216"/>
    </ligand>
</feature>
<feature type="binding site" evidence="1">
    <location>
        <position position="1386"/>
    </location>
    <ligand>
        <name>ADP</name>
        <dbReference type="ChEBI" id="CHEBI:456216"/>
    </ligand>
</feature>
<feature type="binding site" evidence="1">
    <location>
        <position position="1387"/>
    </location>
    <ligand>
        <name>ADP</name>
        <dbReference type="ChEBI" id="CHEBI:456216"/>
    </ligand>
</feature>
<feature type="binding site" evidence="1">
    <location>
        <position position="1483"/>
    </location>
    <ligand>
        <name>ATP</name>
        <dbReference type="ChEBI" id="CHEBI:30616"/>
    </ligand>
</feature>
<feature type="glycosylation site" description="N-linked (GlcNAc...) asparagine" evidence="5 6">
    <location>
        <position position="10"/>
    </location>
</feature>
<feature type="glycosylation site" description="N-linked (GlcNAc...) asparagine" evidence="5">
    <location>
        <position position="1050"/>
    </location>
</feature>
<feature type="disulfide bond" evidence="1">
    <location>
        <begin position="6"/>
        <end position="26"/>
    </location>
</feature>
<feature type="helix" evidence="9">
    <location>
        <begin position="9"/>
        <end position="12"/>
    </location>
</feature>
<feature type="helix" evidence="9">
    <location>
        <begin position="21"/>
        <end position="23"/>
    </location>
</feature>
<feature type="helix" evidence="9">
    <location>
        <begin position="27"/>
        <end position="31"/>
    </location>
</feature>
<feature type="helix" evidence="9">
    <location>
        <begin position="34"/>
        <end position="54"/>
    </location>
</feature>
<feature type="helix" evidence="9">
    <location>
        <begin position="59"/>
        <end position="61"/>
    </location>
</feature>
<feature type="helix" evidence="9">
    <location>
        <begin position="71"/>
        <end position="95"/>
    </location>
</feature>
<feature type="strand" evidence="9">
    <location>
        <begin position="98"/>
        <end position="101"/>
    </location>
</feature>
<feature type="turn" evidence="9">
    <location>
        <begin position="104"/>
        <end position="107"/>
    </location>
</feature>
<feature type="helix" evidence="9">
    <location>
        <begin position="108"/>
        <end position="129"/>
    </location>
</feature>
<feature type="helix" evidence="9">
    <location>
        <begin position="133"/>
        <end position="135"/>
    </location>
</feature>
<feature type="helix" evidence="9">
    <location>
        <begin position="136"/>
        <end position="159"/>
    </location>
</feature>
<feature type="helix" evidence="9">
    <location>
        <begin position="167"/>
        <end position="193"/>
    </location>
</feature>
<feature type="helix" evidence="9">
    <location>
        <begin position="208"/>
        <end position="211"/>
    </location>
</feature>
<feature type="strand" evidence="9">
    <location>
        <begin position="219"/>
        <end position="222"/>
    </location>
</feature>
<feature type="helix" evidence="9">
    <location>
        <begin position="224"/>
        <end position="229"/>
    </location>
</feature>
<feature type="helix" evidence="9">
    <location>
        <begin position="233"/>
        <end position="242"/>
    </location>
</feature>
<feature type="turn" evidence="9">
    <location>
        <begin position="247"/>
        <end position="249"/>
    </location>
</feature>
<feature type="helix" evidence="9">
    <location>
        <begin position="255"/>
        <end position="257"/>
    </location>
</feature>
<feature type="helix" evidence="9">
    <location>
        <begin position="259"/>
        <end position="276"/>
    </location>
</feature>
<feature type="helix" evidence="9">
    <location>
        <begin position="284"/>
        <end position="313"/>
    </location>
</feature>
<feature type="helix" evidence="9">
    <location>
        <begin position="315"/>
        <end position="327"/>
    </location>
</feature>
<feature type="strand" evidence="9">
    <location>
        <begin position="340"/>
        <end position="343"/>
    </location>
</feature>
<feature type="helix" evidence="9">
    <location>
        <begin position="348"/>
        <end position="351"/>
    </location>
</feature>
<feature type="helix" evidence="9">
    <location>
        <begin position="355"/>
        <end position="400"/>
    </location>
</feature>
<feature type="helix" evidence="9">
    <location>
        <begin position="406"/>
        <end position="409"/>
    </location>
</feature>
<feature type="helix" evidence="9">
    <location>
        <begin position="414"/>
        <end position="455"/>
    </location>
</feature>
<feature type="helix" evidence="9">
    <location>
        <begin position="459"/>
        <end position="504"/>
    </location>
</feature>
<feature type="helix" evidence="9">
    <location>
        <begin position="506"/>
        <end position="511"/>
    </location>
</feature>
<feature type="helix" evidence="9">
    <location>
        <begin position="515"/>
        <end position="564"/>
    </location>
</feature>
<feature type="helix" evidence="9">
    <location>
        <begin position="573"/>
        <end position="590"/>
    </location>
</feature>
<feature type="helix" evidence="9">
    <location>
        <begin position="593"/>
        <end position="614"/>
    </location>
</feature>
<feature type="strand" evidence="9">
    <location>
        <begin position="678"/>
        <end position="683"/>
    </location>
</feature>
<feature type="strand" evidence="9">
    <location>
        <begin position="686"/>
        <end position="692"/>
    </location>
</feature>
<feature type="strand" evidence="9">
    <location>
        <begin position="701"/>
        <end position="703"/>
    </location>
</feature>
<feature type="strand" evidence="9">
    <location>
        <begin position="709"/>
        <end position="713"/>
    </location>
</feature>
<feature type="strand" evidence="9">
    <location>
        <begin position="717"/>
        <end position="719"/>
    </location>
</feature>
<feature type="helix" evidence="9">
    <location>
        <begin position="720"/>
        <end position="725"/>
    </location>
</feature>
<feature type="turn" evidence="9">
    <location>
        <begin position="726"/>
        <end position="728"/>
    </location>
</feature>
<feature type="strand" evidence="9">
    <location>
        <begin position="730"/>
        <end position="734"/>
    </location>
</feature>
<feature type="strand" evidence="9">
    <location>
        <begin position="781"/>
        <end position="783"/>
    </location>
</feature>
<feature type="helix" evidence="9">
    <location>
        <begin position="784"/>
        <end position="789"/>
    </location>
</feature>
<feature type="helix" evidence="9">
    <location>
        <begin position="796"/>
        <end position="806"/>
    </location>
</feature>
<feature type="helix" evidence="9">
    <location>
        <begin position="809"/>
        <end position="812"/>
    </location>
</feature>
<feature type="strand" evidence="9">
    <location>
        <begin position="815"/>
        <end position="817"/>
    </location>
</feature>
<feature type="helix" evidence="9">
    <location>
        <begin position="818"/>
        <end position="820"/>
    </location>
</feature>
<feature type="strand" evidence="9">
    <location>
        <begin position="821"/>
        <end position="828"/>
    </location>
</feature>
<feature type="helix" evidence="9">
    <location>
        <begin position="832"/>
        <end position="845"/>
    </location>
</feature>
<feature type="strand" evidence="9">
    <location>
        <begin position="849"/>
        <end position="855"/>
    </location>
</feature>
<feature type="turn" evidence="9">
    <location>
        <begin position="856"/>
        <end position="858"/>
    </location>
</feature>
<feature type="helix" evidence="9">
    <location>
        <begin position="863"/>
        <end position="879"/>
    </location>
</feature>
<feature type="strand" evidence="9">
    <location>
        <begin position="883"/>
        <end position="888"/>
    </location>
</feature>
<feature type="strand" evidence="9">
    <location>
        <begin position="894"/>
        <end position="906"/>
    </location>
</feature>
<feature type="strand" evidence="9">
    <location>
        <begin position="908"/>
        <end position="912"/>
    </location>
</feature>
<feature type="helix" evidence="9">
    <location>
        <begin position="915"/>
        <end position="918"/>
    </location>
</feature>
<feature type="turn" evidence="9">
    <location>
        <begin position="924"/>
        <end position="927"/>
    </location>
</feature>
<feature type="helix" evidence="9">
    <location>
        <begin position="988"/>
        <end position="992"/>
    </location>
</feature>
<feature type="helix" evidence="9">
    <location>
        <begin position="998"/>
        <end position="1007"/>
    </location>
</feature>
<feature type="helix" evidence="9">
    <location>
        <begin position="1011"/>
        <end position="1041"/>
    </location>
</feature>
<feature type="helix" evidence="9">
    <location>
        <begin position="1067"/>
        <end position="1105"/>
    </location>
</feature>
<feature type="helix" evidence="9">
    <location>
        <begin position="1110"/>
        <end position="1115"/>
    </location>
</feature>
<feature type="helix" evidence="9">
    <location>
        <begin position="1120"/>
        <end position="1134"/>
    </location>
</feature>
<feature type="helix" evidence="9">
    <location>
        <begin position="1136"/>
        <end position="1160"/>
    </location>
</feature>
<feature type="helix" evidence="9">
    <location>
        <begin position="1164"/>
        <end position="1209"/>
    </location>
</feature>
<feature type="helix" evidence="9">
    <location>
        <begin position="1211"/>
        <end position="1217"/>
    </location>
</feature>
<feature type="helix" evidence="9">
    <location>
        <begin position="1220"/>
        <end position="1270"/>
    </location>
</feature>
<feature type="helix" evidence="9">
    <location>
        <begin position="1279"/>
        <end position="1286"/>
    </location>
</feature>
<feature type="turn" evidence="9">
    <location>
        <begin position="1287"/>
        <end position="1290"/>
    </location>
</feature>
<feature type="helix" evidence="9">
    <location>
        <begin position="1291"/>
        <end position="1318"/>
    </location>
</feature>
<feature type="strand" evidence="9">
    <location>
        <begin position="1333"/>
        <end position="1336"/>
    </location>
</feature>
<feature type="strand" evidence="9">
    <location>
        <begin position="1348"/>
        <end position="1351"/>
    </location>
</feature>
<feature type="turn" evidence="9">
    <location>
        <begin position="1354"/>
        <end position="1356"/>
    </location>
</feature>
<feature type="strand" evidence="9">
    <location>
        <begin position="1363"/>
        <end position="1365"/>
    </location>
</feature>
<feature type="strand" evidence="9">
    <location>
        <begin position="1373"/>
        <end position="1376"/>
    </location>
</feature>
<feature type="helix" evidence="9">
    <location>
        <begin position="1383"/>
        <end position="1392"/>
    </location>
</feature>
<feature type="strand" evidence="9">
    <location>
        <begin position="1400"/>
        <end position="1402"/>
    </location>
</feature>
<feature type="strand" evidence="9">
    <location>
        <begin position="1408"/>
        <end position="1410"/>
    </location>
</feature>
<feature type="helix" evidence="9">
    <location>
        <begin position="1415"/>
        <end position="1420"/>
    </location>
</feature>
<feature type="strand" evidence="9">
    <location>
        <begin position="1422"/>
        <end position="1424"/>
    </location>
</feature>
<feature type="strand" evidence="9">
    <location>
        <begin position="1433"/>
        <end position="1436"/>
    </location>
</feature>
<feature type="turn" evidence="9">
    <location>
        <begin position="1437"/>
        <end position="1439"/>
    </location>
</feature>
<feature type="turn" evidence="9">
    <location>
        <begin position="1442"/>
        <end position="1444"/>
    </location>
</feature>
<feature type="helix" evidence="9">
    <location>
        <begin position="1450"/>
        <end position="1458"/>
    </location>
</feature>
<feature type="helix" evidence="9">
    <location>
        <begin position="1461"/>
        <end position="1466"/>
    </location>
</feature>
<feature type="strand" evidence="9">
    <location>
        <begin position="1467"/>
        <end position="1469"/>
    </location>
</feature>
<feature type="helix" evidence="9">
    <location>
        <begin position="1470"/>
        <end position="1472"/>
    </location>
</feature>
<feature type="turn" evidence="9">
    <location>
        <begin position="1477"/>
        <end position="1479"/>
    </location>
</feature>
<feature type="helix" evidence="9">
    <location>
        <begin position="1486"/>
        <end position="1497"/>
    </location>
</feature>
<feature type="strand" evidence="9">
    <location>
        <begin position="1502"/>
        <end position="1504"/>
    </location>
</feature>
<feature type="helix" evidence="9">
    <location>
        <begin position="1513"/>
        <end position="1528"/>
    </location>
</feature>
<feature type="strand" evidence="9">
    <location>
        <begin position="1533"/>
        <end position="1535"/>
    </location>
</feature>
<feature type="helix" evidence="9">
    <location>
        <begin position="1540"/>
        <end position="1544"/>
    </location>
</feature>
<feature type="strand" evidence="9">
    <location>
        <begin position="1545"/>
        <end position="1547"/>
    </location>
</feature>
<feature type="strand" evidence="9">
    <location>
        <begin position="1549"/>
        <end position="1553"/>
    </location>
</feature>
<feature type="strand" evidence="9">
    <location>
        <begin position="1556"/>
        <end position="1564"/>
    </location>
</feature>
<feature type="helix" evidence="9">
    <location>
        <begin position="1565"/>
        <end position="1569"/>
    </location>
</feature>
<feature type="helix" evidence="9">
    <location>
        <begin position="1571"/>
        <end position="1577"/>
    </location>
</feature>
<evidence type="ECO:0000250" key="1">
    <source>
        <dbReference type="UniProtKB" id="Q09428"/>
    </source>
</evidence>
<evidence type="ECO:0000255" key="2">
    <source>
        <dbReference type="PROSITE-ProRule" id="PRU00434"/>
    </source>
</evidence>
<evidence type="ECO:0000255" key="3">
    <source>
        <dbReference type="PROSITE-ProRule" id="PRU00441"/>
    </source>
</evidence>
<evidence type="ECO:0000256" key="4">
    <source>
        <dbReference type="SAM" id="MobiDB-lite"/>
    </source>
</evidence>
<evidence type="ECO:0000269" key="5">
    <source>
    </source>
</evidence>
<evidence type="ECO:0000269" key="6">
    <source>
    </source>
</evidence>
<evidence type="ECO:0000305" key="7"/>
<evidence type="ECO:0000305" key="8">
    <source>
    </source>
</evidence>
<evidence type="ECO:0007829" key="9">
    <source>
        <dbReference type="PDB" id="7TYS"/>
    </source>
</evidence>
<dbReference type="EMBL" id="L40623">
    <property type="protein sequence ID" value="AAA99201.1"/>
    <property type="molecule type" value="mRNA"/>
</dbReference>
<dbReference type="PDB" id="5TWV">
    <property type="method" value="EM"/>
    <property type="resolution" value="6.30 A"/>
    <property type="chains" value="B/D/F/H=1-1582"/>
</dbReference>
<dbReference type="PDB" id="5YWB">
    <property type="method" value="EM"/>
    <property type="resolution" value="5.20 A"/>
    <property type="chains" value="B/D/F/H=1-1582"/>
</dbReference>
<dbReference type="PDB" id="6BAA">
    <property type="method" value="EM"/>
    <property type="resolution" value="3.63 A"/>
    <property type="chains" value="E/F/G/H=1-1582"/>
</dbReference>
<dbReference type="PDB" id="6PZ9">
    <property type="method" value="EM"/>
    <property type="resolution" value="3.65 A"/>
    <property type="chains" value="C=1-1582"/>
</dbReference>
<dbReference type="PDB" id="6PZA">
    <property type="method" value="EM"/>
    <property type="resolution" value="3.74 A"/>
    <property type="chains" value="C=1-1582"/>
</dbReference>
<dbReference type="PDB" id="6PZB">
    <property type="method" value="EM"/>
    <property type="resolution" value="4.55 A"/>
    <property type="chains" value="G=1-1582"/>
</dbReference>
<dbReference type="PDB" id="6PZC">
    <property type="method" value="EM"/>
    <property type="resolution" value="4.34 A"/>
    <property type="chains" value="H=1-1582"/>
</dbReference>
<dbReference type="PDB" id="6PZI">
    <property type="method" value="EM"/>
    <property type="resolution" value="4.50 A"/>
    <property type="chains" value="G=1-1582"/>
</dbReference>
<dbReference type="PDB" id="7TYS">
    <property type="method" value="EM"/>
    <property type="resolution" value="3.41 A"/>
    <property type="chains" value="E=1-1582"/>
</dbReference>
<dbReference type="PDB" id="7TYT">
    <property type="method" value="EM"/>
    <property type="resolution" value="3.60 A"/>
    <property type="chains" value="E=1-1582"/>
</dbReference>
<dbReference type="PDB" id="7U1E">
    <property type="method" value="EM"/>
    <property type="resolution" value="4.52 A"/>
    <property type="chains" value="E=1-1582"/>
</dbReference>
<dbReference type="PDB" id="7U1Q">
    <property type="method" value="EM"/>
    <property type="resolution" value="3.90 A"/>
    <property type="chains" value="E=1-1582"/>
</dbReference>
<dbReference type="PDB" id="7U1S">
    <property type="method" value="EM"/>
    <property type="resolution" value="3.80 A"/>
    <property type="chains" value="E=1-1582"/>
</dbReference>
<dbReference type="PDB" id="7U24">
    <property type="method" value="EM"/>
    <property type="resolution" value="3.58 A"/>
    <property type="chains" value="E=1-1582"/>
</dbReference>
<dbReference type="PDB" id="7U2X">
    <property type="method" value="EM"/>
    <property type="resolution" value="4.10 A"/>
    <property type="chains" value="E=1-1582"/>
</dbReference>
<dbReference type="PDB" id="7U6Y">
    <property type="method" value="EM"/>
    <property type="resolution" value="7.40 A"/>
    <property type="chains" value="E=1-1582"/>
</dbReference>
<dbReference type="PDB" id="7U7M">
    <property type="method" value="EM"/>
    <property type="resolution" value="5.20 A"/>
    <property type="chains" value="E=1-1582"/>
</dbReference>
<dbReference type="PDB" id="7UAA">
    <property type="method" value="EM"/>
    <property type="resolution" value="5.70 A"/>
    <property type="chains" value="E=1-1582"/>
</dbReference>
<dbReference type="PDB" id="7UQR">
    <property type="method" value="EM"/>
    <property type="resolution" value="4.55 A"/>
    <property type="chains" value="E=1-1582"/>
</dbReference>
<dbReference type="PDBsum" id="5TWV"/>
<dbReference type="PDBsum" id="5YWB"/>
<dbReference type="PDBsum" id="6BAA"/>
<dbReference type="PDBsum" id="6PZ9"/>
<dbReference type="PDBsum" id="6PZA"/>
<dbReference type="PDBsum" id="6PZB"/>
<dbReference type="PDBsum" id="6PZC"/>
<dbReference type="PDBsum" id="6PZI"/>
<dbReference type="PDBsum" id="7TYS"/>
<dbReference type="PDBsum" id="7TYT"/>
<dbReference type="PDBsum" id="7U1E"/>
<dbReference type="PDBsum" id="7U1Q"/>
<dbReference type="PDBsum" id="7U1S"/>
<dbReference type="PDBsum" id="7U24"/>
<dbReference type="PDBsum" id="7U2X"/>
<dbReference type="PDBsum" id="7U6Y"/>
<dbReference type="PDBsum" id="7U7M"/>
<dbReference type="PDBsum" id="7UAA"/>
<dbReference type="PDBsum" id="7UQR"/>
<dbReference type="EMDB" id="EMD-20528"/>
<dbReference type="EMDB" id="EMD-20530"/>
<dbReference type="EMDB" id="EMD-20533"/>
<dbReference type="EMDB" id="EMD-20534"/>
<dbReference type="EMDB" id="EMD-20535"/>
<dbReference type="EMDB" id="EMD-26193"/>
<dbReference type="EMDB" id="EMD-26194"/>
<dbReference type="EMDB" id="EMD-26299"/>
<dbReference type="EMDB" id="EMD-26303"/>
<dbReference type="EMDB" id="EMD-26304"/>
<dbReference type="EMDB" id="EMD-26307"/>
<dbReference type="EMDB" id="EMD-26308"/>
<dbReference type="EMDB" id="EMD-26309"/>
<dbReference type="EMDB" id="EMD-26312"/>
<dbReference type="EMDB" id="EMD-26321"/>
<dbReference type="EMDB" id="EMD-3265"/>
<dbReference type="EMDB" id="EMD-7073"/>
<dbReference type="EMDB" id="EMD-8470"/>
<dbReference type="SMR" id="Q09427"/>
<dbReference type="CORUM" id="Q09427"/>
<dbReference type="GlyCosmos" id="Q09427">
    <property type="glycosylation" value="2 sites, No reported glycans"/>
</dbReference>
<dbReference type="iPTMnet" id="Q09427"/>
<dbReference type="ABCD" id="Q09427">
    <property type="antibodies" value="1 sequenced antibody"/>
</dbReference>
<dbReference type="GO" id="GO:0005886">
    <property type="term" value="C:plasma membrane"/>
    <property type="evidence" value="ECO:0007669"/>
    <property type="project" value="UniProtKB-SubCell"/>
</dbReference>
<dbReference type="GO" id="GO:0032991">
    <property type="term" value="C:protein-containing complex"/>
    <property type="evidence" value="ECO:0007669"/>
    <property type="project" value="UniProtKB-ARBA"/>
</dbReference>
<dbReference type="GO" id="GO:0140359">
    <property type="term" value="F:ABC-type transporter activity"/>
    <property type="evidence" value="ECO:0007669"/>
    <property type="project" value="InterPro"/>
</dbReference>
<dbReference type="GO" id="GO:0005524">
    <property type="term" value="F:ATP binding"/>
    <property type="evidence" value="ECO:0007669"/>
    <property type="project" value="UniProtKB-KW"/>
</dbReference>
<dbReference type="GO" id="GO:0016887">
    <property type="term" value="F:ATP hydrolysis activity"/>
    <property type="evidence" value="ECO:0007669"/>
    <property type="project" value="InterPro"/>
</dbReference>
<dbReference type="GO" id="GO:0046872">
    <property type="term" value="F:metal ion binding"/>
    <property type="evidence" value="ECO:0007669"/>
    <property type="project" value="UniProtKB-KW"/>
</dbReference>
<dbReference type="GO" id="GO:0005267">
    <property type="term" value="F:potassium channel activity"/>
    <property type="evidence" value="ECO:0000250"/>
    <property type="project" value="UniProtKB"/>
</dbReference>
<dbReference type="GO" id="GO:0008281">
    <property type="term" value="F:sulfonylurea receptor activity"/>
    <property type="evidence" value="ECO:0007669"/>
    <property type="project" value="InterPro"/>
</dbReference>
<dbReference type="CDD" id="cd18591">
    <property type="entry name" value="ABC_6TM_SUR1_D1_like"/>
    <property type="match status" value="1"/>
</dbReference>
<dbReference type="CDD" id="cd18602">
    <property type="entry name" value="ABC_6TM_SUR1_D2_like"/>
    <property type="match status" value="1"/>
</dbReference>
<dbReference type="DisProt" id="DP01429"/>
<dbReference type="FunFam" id="1.20.1560.10:FF:000005">
    <property type="entry name" value="ATP-binding cassette, sub-family C (CFTR/MRP), member 9"/>
    <property type="match status" value="1"/>
</dbReference>
<dbReference type="FunFam" id="1.20.1560.10:FF:000006">
    <property type="entry name" value="ATP-binding cassette, sub-family C (CFTR/MRP), member 9"/>
    <property type="match status" value="1"/>
</dbReference>
<dbReference type="FunFam" id="3.40.50.300:FF:000197">
    <property type="entry name" value="ATP-binding cassette, sub-family C (CFTR/MRP), member 9"/>
    <property type="match status" value="1"/>
</dbReference>
<dbReference type="FunFam" id="3.40.50.300:FF:000394">
    <property type="entry name" value="ATP-binding cassette, sub-family C (CFTR/MRP), member 9"/>
    <property type="match status" value="1"/>
</dbReference>
<dbReference type="Gene3D" id="1.20.1560.10">
    <property type="entry name" value="ABC transporter type 1, transmembrane domain"/>
    <property type="match status" value="2"/>
</dbReference>
<dbReference type="Gene3D" id="3.40.50.300">
    <property type="entry name" value="P-loop containing nucleotide triphosphate hydrolases"/>
    <property type="match status" value="2"/>
</dbReference>
<dbReference type="InterPro" id="IPR003593">
    <property type="entry name" value="AAA+_ATPase"/>
</dbReference>
<dbReference type="InterPro" id="IPR011527">
    <property type="entry name" value="ABC1_TM_dom"/>
</dbReference>
<dbReference type="InterPro" id="IPR036640">
    <property type="entry name" value="ABC1_TM_sf"/>
</dbReference>
<dbReference type="InterPro" id="IPR003439">
    <property type="entry name" value="ABC_transporter-like_ATP-bd"/>
</dbReference>
<dbReference type="InterPro" id="IPR017871">
    <property type="entry name" value="ABC_transporter-like_CS"/>
</dbReference>
<dbReference type="InterPro" id="IPR050173">
    <property type="entry name" value="ABC_transporter_C-like"/>
</dbReference>
<dbReference type="InterPro" id="IPR000844">
    <property type="entry name" value="ABCC8"/>
</dbReference>
<dbReference type="InterPro" id="IPR000388">
    <property type="entry name" value="ABCC8/9"/>
</dbReference>
<dbReference type="InterPro" id="IPR027417">
    <property type="entry name" value="P-loop_NTPase"/>
</dbReference>
<dbReference type="PANTHER" id="PTHR24223">
    <property type="entry name" value="ATP-BINDING CASSETTE SUB-FAMILY C"/>
    <property type="match status" value="1"/>
</dbReference>
<dbReference type="PANTHER" id="PTHR24223:SF187">
    <property type="entry name" value="ATP-BINDING CASSETTE SUB-FAMILY C MEMBER 8"/>
    <property type="match status" value="1"/>
</dbReference>
<dbReference type="Pfam" id="PF00664">
    <property type="entry name" value="ABC_membrane"/>
    <property type="match status" value="2"/>
</dbReference>
<dbReference type="Pfam" id="PF00005">
    <property type="entry name" value="ABC_tran"/>
    <property type="match status" value="2"/>
</dbReference>
<dbReference type="PRINTS" id="PR01093">
    <property type="entry name" value="SULFNYLUR1"/>
</dbReference>
<dbReference type="PRINTS" id="PR01092">
    <property type="entry name" value="SULFNYLUREAR"/>
</dbReference>
<dbReference type="SMART" id="SM00382">
    <property type="entry name" value="AAA"/>
    <property type="match status" value="2"/>
</dbReference>
<dbReference type="SUPFAM" id="SSF90123">
    <property type="entry name" value="ABC transporter transmembrane region"/>
    <property type="match status" value="2"/>
</dbReference>
<dbReference type="SUPFAM" id="SSF52540">
    <property type="entry name" value="P-loop containing nucleoside triphosphate hydrolases"/>
    <property type="match status" value="2"/>
</dbReference>
<dbReference type="PROSITE" id="PS50929">
    <property type="entry name" value="ABC_TM1F"/>
    <property type="match status" value="2"/>
</dbReference>
<dbReference type="PROSITE" id="PS00211">
    <property type="entry name" value="ABC_TRANSPORTER_1"/>
    <property type="match status" value="2"/>
</dbReference>
<dbReference type="PROSITE" id="PS50893">
    <property type="entry name" value="ABC_TRANSPORTER_2"/>
    <property type="match status" value="2"/>
</dbReference>
<reference key="1">
    <citation type="journal article" date="1995" name="Science">
        <title>Cloning of the beta cell high-affinity sulfonylurea receptor: a regulator of insulin secretion.</title>
        <authorList>
            <person name="Aguilar-Bryan L."/>
            <person name="Nichols C.G."/>
            <person name="Wechsler S.W."/>
            <person name="Clement J.P. IV"/>
            <person name="Boyd A.E. III"/>
            <person name="Gonzalez G."/>
            <person name="Herrera-Sosa H."/>
            <person name="Nguy K."/>
            <person name="Bryan J."/>
            <person name="Nelson D.A."/>
        </authorList>
    </citation>
    <scope>NUCLEOTIDE SEQUENCE [MRNA]</scope>
    <scope>PARTIAL PROTEIN SEQUENCE</scope>
    <source>
        <tissue>Pancreatic islet</tissue>
    </source>
</reference>
<reference key="2">
    <citation type="journal article" date="1996" name="Biochemistry">
        <title>The high-affinity sulfonylurea receptor: distribution, glycosylation, purification, and immunoprecipitation of two forms from endocrine and neuroendocrine cell lines.</title>
        <authorList>
            <person name="Nelson D.A."/>
            <person name="Bryan J."/>
            <person name="Wechsler S."/>
            <person name="Clement J.P. IV"/>
            <person name="Aguilar-Bryan L."/>
        </authorList>
    </citation>
    <scope>GLYCOSYLATION AT ASN-10</scope>
</reference>
<reference key="3">
    <citation type="journal article" date="1999" name="J. Biol. Chem.">
        <title>Membrane topology of the amino-terminal region of the sulfonylurea receptor.</title>
        <authorList>
            <person name="Raab-Graham K.F."/>
            <person name="Cirilo L.J."/>
            <person name="Boettcher A.A."/>
            <person name="Radeke C.M."/>
            <person name="Vandenberg C.A."/>
        </authorList>
    </citation>
    <scope>TOPOLOGY</scope>
    <scope>GLYCOSYLATION AT ASN-10 AND ASN-1050</scope>
</reference>
<comment type="function">
    <text evidence="1">Regulator subunit of pancreatic ATP-sensitive potassium channel (KATP), playing a major role in the regulation of insulin release. In pancreatic cells, it forms KATP channels with KCNJ11; KCNJ11 forms the channel pore while ABCC8 is required for activation and regulation.</text>
</comment>
<comment type="activity regulation">
    <text evidence="1">KATP channels are regulated by cytoplasmic ATP/ADP ratios; ATP inhibits the channel by closing the pore, while ADP activates the channel. Activated by phosphatidylinositol 4,5-biphosphate (PtdIns(4,5)P2).</text>
</comment>
<comment type="subunit">
    <text evidence="1">Forms an heterooctamer with KCNJ11; four ABCC8/SUR1 molecules interact with one KCNJ11 homotetramer.</text>
</comment>
<comment type="subcellular location">
    <subcellularLocation>
        <location evidence="1">Cell membrane</location>
        <topology evidence="1">Multi-pass membrane protein</topology>
    </subcellularLocation>
</comment>
<comment type="similarity">
    <text evidence="7">Belongs to the ABC transporter superfamily. ABCC family. Conjugate transporter (TC 3.A.1.208) subfamily.</text>
</comment>
<organism>
    <name type="scientific">Cricetus cricetus</name>
    <name type="common">Black-bellied hamster</name>
    <dbReference type="NCBI Taxonomy" id="10034"/>
    <lineage>
        <taxon>Eukaryota</taxon>
        <taxon>Metazoa</taxon>
        <taxon>Chordata</taxon>
        <taxon>Craniata</taxon>
        <taxon>Vertebrata</taxon>
        <taxon>Euteleostomi</taxon>
        <taxon>Mammalia</taxon>
        <taxon>Eutheria</taxon>
        <taxon>Euarchontoglires</taxon>
        <taxon>Glires</taxon>
        <taxon>Rodentia</taxon>
        <taxon>Myomorpha</taxon>
        <taxon>Muroidea</taxon>
        <taxon>Cricetidae</taxon>
        <taxon>Cricetinae</taxon>
        <taxon>Cricetus</taxon>
    </lineage>
</organism>
<protein>
    <recommendedName>
        <fullName>ATP-binding cassette sub-family C member 8</fullName>
    </recommendedName>
    <alternativeName>
        <fullName>Sulfonylurea receptor 1</fullName>
    </alternativeName>
</protein>
<proteinExistence type="evidence at protein level"/>
<keyword id="KW-0002">3D-structure</keyword>
<keyword id="KW-0067">ATP-binding</keyword>
<keyword id="KW-1003">Cell membrane</keyword>
<keyword id="KW-0903">Direct protein sequencing</keyword>
<keyword id="KW-1015">Disulfide bond</keyword>
<keyword id="KW-0325">Glycoprotein</keyword>
<keyword id="KW-0460">Magnesium</keyword>
<keyword id="KW-0472">Membrane</keyword>
<keyword id="KW-0479">Metal-binding</keyword>
<keyword id="KW-0547">Nucleotide-binding</keyword>
<keyword id="KW-0675">Receptor</keyword>
<keyword id="KW-0677">Repeat</keyword>
<keyword id="KW-0812">Transmembrane</keyword>
<keyword id="KW-1133">Transmembrane helix</keyword>
<keyword id="KW-0813">Transport</keyword>
<accession>Q09427</accession>